<dbReference type="EMBL" id="L07370">
    <property type="protein sequence ID" value="AAA51494.1"/>
    <property type="molecule type" value="Genomic_RNA"/>
</dbReference>
<dbReference type="SMR" id="P69295"/>
<dbReference type="Proteomes" id="UP000149784">
    <property type="component" value="Genome"/>
</dbReference>
<dbReference type="GO" id="GO:0019029">
    <property type="term" value="C:helical viral capsid"/>
    <property type="evidence" value="ECO:0007669"/>
    <property type="project" value="UniProtKB-UniRule"/>
</dbReference>
<dbReference type="GO" id="GO:0043657">
    <property type="term" value="C:host cell"/>
    <property type="evidence" value="ECO:0007669"/>
    <property type="project" value="GOC"/>
</dbReference>
<dbReference type="GO" id="GO:0042025">
    <property type="term" value="C:host cell nucleus"/>
    <property type="evidence" value="ECO:0007669"/>
    <property type="project" value="UniProtKB-SubCell"/>
</dbReference>
<dbReference type="GO" id="GO:1990904">
    <property type="term" value="C:ribonucleoprotein complex"/>
    <property type="evidence" value="ECO:0007669"/>
    <property type="project" value="UniProtKB-KW"/>
</dbReference>
<dbReference type="GO" id="GO:0019013">
    <property type="term" value="C:viral nucleocapsid"/>
    <property type="evidence" value="ECO:0007669"/>
    <property type="project" value="UniProtKB-UniRule"/>
</dbReference>
<dbReference type="GO" id="GO:0003723">
    <property type="term" value="F:RNA binding"/>
    <property type="evidence" value="ECO:0007669"/>
    <property type="project" value="UniProtKB-UniRule"/>
</dbReference>
<dbReference type="GO" id="GO:0005198">
    <property type="term" value="F:structural molecule activity"/>
    <property type="evidence" value="ECO:0007669"/>
    <property type="project" value="UniProtKB-UniRule"/>
</dbReference>
<dbReference type="GO" id="GO:0046718">
    <property type="term" value="P:symbiont entry into host cell"/>
    <property type="evidence" value="ECO:0007669"/>
    <property type="project" value="UniProtKB-KW"/>
</dbReference>
<dbReference type="GO" id="GO:0075732">
    <property type="term" value="P:viral penetration into host nucleus"/>
    <property type="evidence" value="ECO:0007669"/>
    <property type="project" value="UniProtKB-UniRule"/>
</dbReference>
<dbReference type="HAMAP" id="MF_04070">
    <property type="entry name" value="INFV_NCAP"/>
    <property type="match status" value="1"/>
</dbReference>
<dbReference type="InterPro" id="IPR002141">
    <property type="entry name" value="Flu_NP"/>
</dbReference>
<dbReference type="Pfam" id="PF00506">
    <property type="entry name" value="Flu_NP"/>
    <property type="match status" value="1"/>
</dbReference>
<dbReference type="SUPFAM" id="SSF161003">
    <property type="entry name" value="flu NP-like"/>
    <property type="match status" value="1"/>
</dbReference>
<protein>
    <recommendedName>
        <fullName evidence="1">Nucleoprotein</fullName>
    </recommendedName>
    <alternativeName>
        <fullName evidence="1">Nucleocapsid protein</fullName>
        <shortName evidence="1">Protein N</shortName>
    </alternativeName>
</protein>
<accession>P69295</accession>
<accession>Q07539</accession>
<accession>Q08029</accession>
<keyword id="KW-0167">Capsid protein</keyword>
<keyword id="KW-1139">Helical capsid protein</keyword>
<keyword id="KW-1048">Host nucleus</keyword>
<keyword id="KW-0945">Host-virus interaction</keyword>
<keyword id="KW-0687">Ribonucleoprotein</keyword>
<keyword id="KW-0694">RNA-binding</keyword>
<keyword id="KW-0543">Viral nucleoprotein</keyword>
<keyword id="KW-1163">Viral penetration into host nucleus</keyword>
<keyword id="KW-0946">Virion</keyword>
<keyword id="KW-1160">Virus entry into host cell</keyword>
<proteinExistence type="inferred from homology"/>
<name>NCAP_I88A3</name>
<organism>
    <name type="scientific">Influenza A virus (strain A/Memphis/8/1988 H3N2)</name>
    <dbReference type="NCBI Taxonomy" id="383588"/>
    <lineage>
        <taxon>Viruses</taxon>
        <taxon>Riboviria</taxon>
        <taxon>Orthornavirae</taxon>
        <taxon>Negarnaviricota</taxon>
        <taxon>Polyploviricotina</taxon>
        <taxon>Insthoviricetes</taxon>
        <taxon>Articulavirales</taxon>
        <taxon>Orthomyxoviridae</taxon>
        <taxon>Alphainfluenzavirus</taxon>
        <taxon>Alphainfluenzavirus influenzae</taxon>
        <taxon>Influenza A virus</taxon>
    </lineage>
</organism>
<evidence type="ECO:0000255" key="1">
    <source>
        <dbReference type="HAMAP-Rule" id="MF_04070"/>
    </source>
</evidence>
<evidence type="ECO:0000256" key="2">
    <source>
        <dbReference type="SAM" id="MobiDB-lite"/>
    </source>
</evidence>
<feature type="chain" id="PRO_0000079075" description="Nucleoprotein">
    <location>
        <begin position="1"/>
        <end position="498"/>
    </location>
</feature>
<feature type="region of interest" description="Disordered" evidence="2">
    <location>
        <begin position="1"/>
        <end position="21"/>
    </location>
</feature>
<feature type="short sequence motif" description="Unconventional nuclear localization signal" evidence="1">
    <location>
        <begin position="1"/>
        <end position="18"/>
    </location>
</feature>
<feature type="short sequence motif" description="Bipartite nuclear localization signal" evidence="1">
    <location>
        <begin position="198"/>
        <end position="216"/>
    </location>
</feature>
<feature type="compositionally biased region" description="Basic and acidic residues" evidence="2">
    <location>
        <begin position="8"/>
        <end position="21"/>
    </location>
</feature>
<reference key="1">
    <citation type="journal article" date="1993" name="J. Virol.">
        <title>Analysis of the evolution and variation of the human influenza A virus nucleoprotein gene from 1933 to 1990.</title>
        <authorList>
            <person name="Shu L.L."/>
            <person name="Bean W.J."/>
            <person name="Webster R.G."/>
        </authorList>
    </citation>
    <scope>NUCLEOTIDE SEQUENCE [GENOMIC RNA]</scope>
</reference>
<comment type="function">
    <text evidence="1">Encapsidates the negative strand viral RNA, protecting it from nucleases. The encapsidated genomic RNA is termed the ribonucleoprotein (RNP) and serves as template for transcription and replication. The RNP needs to be localized in the host nucleus to start an infectious cycle, but is too large to diffuse through the nuclear pore complex. NP comprises at least 2 nuclear localization signals that are responsible for the active RNP import into the nucleus through cellular importin alpha/beta pathway. Later in the infection, nclear export of RNPs are mediated through viral proteins NEP interacting with M1 which binds nucleoproteins. It is possible that nucleoprotein binds directly host exportin-1/XPO1 and plays an active role in RNPs nuclear export. M1 interaction with RNP seems to hide nucleoprotein's nuclear localization signals. Soon after a virion infects a new cell, M1 dissociates from the RNP under acidification of the virion driven by M2 protein. Dissociation of M1 from RNP unmasks nucleoprotein's nuclear localization signals, targeting the RNP to the nucleus.</text>
</comment>
<comment type="subunit">
    <text evidence="1">Homomultimerizes to form the nucleocapsid. May bind host exportin-1/XPO1. Binds to viral genomic RNA. Protein-RNA contacts are mediated by a combination of electrostatic interactions between positively charged residues and the phosphate backbone and planar interactions between aromatic side chains and bases.</text>
</comment>
<comment type="subcellular location">
    <subcellularLocation>
        <location evidence="1">Virion</location>
    </subcellularLocation>
    <subcellularLocation>
        <location evidence="1">Host nucleus</location>
    </subcellularLocation>
</comment>
<comment type="PTM">
    <text evidence="1">Late in virus-infected cells, may be cleaved from a 56-kDa protein to a 53-kDa protein by a cellular caspase. This cleavage might be a marker for the onset of apoptosis in infected cells or have a specific function in virus host interaction.</text>
</comment>
<comment type="similarity">
    <text evidence="1">Belongs to the influenza viruses nucleoprotein family.</text>
</comment>
<sequence>MASQGTKRSYEQMETDGERQNATEIRASVGKMIDGIGRFYIQMCTELKLSDYEGRLIQNSLTVERMVLSAFDERRNRYLEEHPSAGKDPKKTGGPIYKRVGGRWMRELVLYDKEEIRRIWRQANNGDDATRGLTHMMIWHSNLNDTTYQRTRALVRTGMDPRMCSLMQGSTLPRRSGAAGAAVKGIGTMVMELIRMIKRGINDRNFWRGENGRKTRSAYERMCNILKGKFQTAAQRAMMDQVRESRNPGNAEIEDLIFSARSALILRGSVAHKSCLPACVYGPAVSSGYDFEKEGYSLVGIDPFKLLQNSQVYSLIRPNENPAHKSQLVWMACHSAAFEDLRLLSFIRGTKVSPRGKLSTRGVQIASNENMDNMESSTLELRSRYWAIRTRSGGNTNQQRASAGQISVQPTFSVQRNLPFEKSTVMAAFTGNTEGRTSDMRAEIIRMMEGAKPEEVSFRGRGVFELSDEKATNPIVPSFDMSNEGSYFFGDNAEEYDN</sequence>
<organismHost>
    <name type="scientific">Aves</name>
    <dbReference type="NCBI Taxonomy" id="8782"/>
</organismHost>
<organismHost>
    <name type="scientific">Cetacea</name>
    <name type="common">whales</name>
    <dbReference type="NCBI Taxonomy" id="9721"/>
</organismHost>
<organismHost>
    <name type="scientific">Homo sapiens</name>
    <name type="common">Human</name>
    <dbReference type="NCBI Taxonomy" id="9606"/>
</organismHost>
<organismHost>
    <name type="scientific">Phocidae</name>
    <name type="common">true seals</name>
    <dbReference type="NCBI Taxonomy" id="9709"/>
</organismHost>
<organismHost>
    <name type="scientific">Sus scrofa</name>
    <name type="common">Pig</name>
    <dbReference type="NCBI Taxonomy" id="9823"/>
</organismHost>
<gene>
    <name evidence="1" type="primary">NP</name>
</gene>